<protein>
    <recommendedName>
        <fullName evidence="1">Chaperonin GroEL</fullName>
        <ecNumber evidence="1">5.6.1.7</ecNumber>
    </recommendedName>
    <alternativeName>
        <fullName evidence="1">60 kDa chaperonin</fullName>
    </alternativeName>
    <alternativeName>
        <fullName evidence="1">Chaperonin-60</fullName>
        <shortName evidence="1">Cpn60</shortName>
    </alternativeName>
</protein>
<proteinExistence type="inferred from homology"/>
<gene>
    <name evidence="1" type="primary">groEL</name>
    <name evidence="1" type="synonym">groL</name>
    <name type="ordered locus">CMS2756</name>
</gene>
<sequence length="539" mass="56781">MAKIIAFDEEARRGLERGLNILADAVRVTLGPRGRNVVLEKKWGAPTITNDGVSIAKEIELDDPFEKIGAELVKEVAKKTDDVAGDGTTTATVLAQALVREGLRNVAAGADPISLKRGIEKAVAAVTEELKAAAKEIETKEEIAATASISAGDSTIGAIIAEAIDKVGKEGVVTVEESNTFGTELELTEGMRFDKGYLSQYFVTDPERQEAVFEDAYILIVNSKISNIKDLLPIVDKVIQSGKQLLIIAEDVDGEALATLVVNKIRGIFKSVAVKAPGFGDRRKAQLQDIAILTGGQVIAEEVGLKLENVTLDLLGTARKVVITKDETTIVEGGGDATEIAARVQQIRNEIGNTDSDYDREKLQERLAKLAGGVAVIKAGAATEVELKERKHRIEDAVRNAKAAVEEGIVAGGGVALIQAGKLAFEKLQLEGDEATGANIVRVAVDAPLKQIALNAGLEPGVVAERVRNLPSGHGLNAATGEYVDMLAAGINDPVKVTRSALLNAASIAGLFLTTEAVVADKPEKNPAPAGDPTGGMDF</sequence>
<feature type="chain" id="PRO_1000082466" description="Chaperonin GroEL">
    <location>
        <begin position="1"/>
        <end position="539"/>
    </location>
</feature>
<feature type="binding site" evidence="1">
    <location>
        <begin position="29"/>
        <end position="32"/>
    </location>
    <ligand>
        <name>ATP</name>
        <dbReference type="ChEBI" id="CHEBI:30616"/>
    </ligand>
</feature>
<feature type="binding site" evidence="1">
    <location>
        <begin position="86"/>
        <end position="90"/>
    </location>
    <ligand>
        <name>ATP</name>
        <dbReference type="ChEBI" id="CHEBI:30616"/>
    </ligand>
</feature>
<feature type="binding site" evidence="1">
    <location>
        <position position="413"/>
    </location>
    <ligand>
        <name>ATP</name>
        <dbReference type="ChEBI" id="CHEBI:30616"/>
    </ligand>
</feature>
<feature type="binding site" evidence="1">
    <location>
        <begin position="477"/>
        <end position="479"/>
    </location>
    <ligand>
        <name>ATP</name>
        <dbReference type="ChEBI" id="CHEBI:30616"/>
    </ligand>
</feature>
<feature type="binding site" evidence="1">
    <location>
        <position position="493"/>
    </location>
    <ligand>
        <name>ATP</name>
        <dbReference type="ChEBI" id="CHEBI:30616"/>
    </ligand>
</feature>
<dbReference type="EC" id="5.6.1.7" evidence="1"/>
<dbReference type="EMBL" id="AM849034">
    <property type="protein sequence ID" value="CAQ02828.1"/>
    <property type="molecule type" value="Genomic_DNA"/>
</dbReference>
<dbReference type="RefSeq" id="WP_012039166.1">
    <property type="nucleotide sequence ID" value="NZ_MZMN01000003.1"/>
</dbReference>
<dbReference type="SMR" id="B0RAY1"/>
<dbReference type="STRING" id="31964.CMS2756"/>
<dbReference type="GeneID" id="92948475"/>
<dbReference type="KEGG" id="cms:CMS2756"/>
<dbReference type="eggNOG" id="COG0459">
    <property type="taxonomic scope" value="Bacteria"/>
</dbReference>
<dbReference type="HOGENOM" id="CLU_016503_3_0_11"/>
<dbReference type="OrthoDB" id="9766614at2"/>
<dbReference type="Proteomes" id="UP000001318">
    <property type="component" value="Chromosome"/>
</dbReference>
<dbReference type="GO" id="GO:0005737">
    <property type="term" value="C:cytoplasm"/>
    <property type="evidence" value="ECO:0007669"/>
    <property type="project" value="UniProtKB-SubCell"/>
</dbReference>
<dbReference type="GO" id="GO:0005524">
    <property type="term" value="F:ATP binding"/>
    <property type="evidence" value="ECO:0007669"/>
    <property type="project" value="UniProtKB-UniRule"/>
</dbReference>
<dbReference type="GO" id="GO:0140662">
    <property type="term" value="F:ATP-dependent protein folding chaperone"/>
    <property type="evidence" value="ECO:0007669"/>
    <property type="project" value="InterPro"/>
</dbReference>
<dbReference type="GO" id="GO:0016853">
    <property type="term" value="F:isomerase activity"/>
    <property type="evidence" value="ECO:0007669"/>
    <property type="project" value="UniProtKB-KW"/>
</dbReference>
<dbReference type="GO" id="GO:0051082">
    <property type="term" value="F:unfolded protein binding"/>
    <property type="evidence" value="ECO:0007669"/>
    <property type="project" value="UniProtKB-UniRule"/>
</dbReference>
<dbReference type="GO" id="GO:0042026">
    <property type="term" value="P:protein refolding"/>
    <property type="evidence" value="ECO:0007669"/>
    <property type="project" value="UniProtKB-UniRule"/>
</dbReference>
<dbReference type="CDD" id="cd03344">
    <property type="entry name" value="GroEL"/>
    <property type="match status" value="1"/>
</dbReference>
<dbReference type="FunFam" id="3.50.7.10:FF:000001">
    <property type="entry name" value="60 kDa chaperonin"/>
    <property type="match status" value="1"/>
</dbReference>
<dbReference type="Gene3D" id="3.50.7.10">
    <property type="entry name" value="GroEL"/>
    <property type="match status" value="1"/>
</dbReference>
<dbReference type="Gene3D" id="1.10.560.10">
    <property type="entry name" value="GroEL-like equatorial domain"/>
    <property type="match status" value="1"/>
</dbReference>
<dbReference type="Gene3D" id="3.30.260.10">
    <property type="entry name" value="TCP-1-like chaperonin intermediate domain"/>
    <property type="match status" value="1"/>
</dbReference>
<dbReference type="HAMAP" id="MF_00600">
    <property type="entry name" value="CH60"/>
    <property type="match status" value="1"/>
</dbReference>
<dbReference type="InterPro" id="IPR018370">
    <property type="entry name" value="Chaperonin_Cpn60_CS"/>
</dbReference>
<dbReference type="InterPro" id="IPR001844">
    <property type="entry name" value="Cpn60/GroEL"/>
</dbReference>
<dbReference type="InterPro" id="IPR002423">
    <property type="entry name" value="Cpn60/GroEL/TCP-1"/>
</dbReference>
<dbReference type="InterPro" id="IPR027409">
    <property type="entry name" value="GroEL-like_apical_dom_sf"/>
</dbReference>
<dbReference type="InterPro" id="IPR027413">
    <property type="entry name" value="GROEL-like_equatorial_sf"/>
</dbReference>
<dbReference type="InterPro" id="IPR027410">
    <property type="entry name" value="TCP-1-like_intermed_sf"/>
</dbReference>
<dbReference type="NCBIfam" id="TIGR02348">
    <property type="entry name" value="GroEL"/>
    <property type="match status" value="1"/>
</dbReference>
<dbReference type="NCBIfam" id="NF000592">
    <property type="entry name" value="PRK00013.1"/>
    <property type="match status" value="1"/>
</dbReference>
<dbReference type="NCBIfam" id="NF009487">
    <property type="entry name" value="PRK12849.1"/>
    <property type="match status" value="1"/>
</dbReference>
<dbReference type="NCBIfam" id="NF009488">
    <property type="entry name" value="PRK12850.1"/>
    <property type="match status" value="1"/>
</dbReference>
<dbReference type="NCBIfam" id="NF009489">
    <property type="entry name" value="PRK12851.1"/>
    <property type="match status" value="1"/>
</dbReference>
<dbReference type="PANTHER" id="PTHR45633">
    <property type="entry name" value="60 KDA HEAT SHOCK PROTEIN, MITOCHONDRIAL"/>
    <property type="match status" value="1"/>
</dbReference>
<dbReference type="Pfam" id="PF00118">
    <property type="entry name" value="Cpn60_TCP1"/>
    <property type="match status" value="1"/>
</dbReference>
<dbReference type="PRINTS" id="PR00298">
    <property type="entry name" value="CHAPERONIN60"/>
</dbReference>
<dbReference type="SUPFAM" id="SSF52029">
    <property type="entry name" value="GroEL apical domain-like"/>
    <property type="match status" value="1"/>
</dbReference>
<dbReference type="SUPFAM" id="SSF48592">
    <property type="entry name" value="GroEL equatorial domain-like"/>
    <property type="match status" value="1"/>
</dbReference>
<dbReference type="SUPFAM" id="SSF54849">
    <property type="entry name" value="GroEL-intermediate domain like"/>
    <property type="match status" value="1"/>
</dbReference>
<dbReference type="PROSITE" id="PS00296">
    <property type="entry name" value="CHAPERONINS_CPN60"/>
    <property type="match status" value="1"/>
</dbReference>
<name>CH60_CLASE</name>
<comment type="function">
    <text evidence="1">Together with its co-chaperonin GroES, plays an essential role in assisting protein folding. The GroEL-GroES system forms a nano-cage that allows encapsulation of the non-native substrate proteins and provides a physical environment optimized to promote and accelerate protein folding.</text>
</comment>
<comment type="catalytic activity">
    <reaction evidence="1">
        <text>ATP + H2O + a folded polypeptide = ADP + phosphate + an unfolded polypeptide.</text>
        <dbReference type="EC" id="5.6.1.7"/>
    </reaction>
</comment>
<comment type="subunit">
    <text evidence="1">Forms a cylinder of 14 subunits composed of two heptameric rings stacked back-to-back. Interacts with the co-chaperonin GroES.</text>
</comment>
<comment type="subcellular location">
    <subcellularLocation>
        <location evidence="1">Cytoplasm</location>
    </subcellularLocation>
</comment>
<comment type="similarity">
    <text evidence="1">Belongs to the chaperonin (HSP60) family.</text>
</comment>
<keyword id="KW-0067">ATP-binding</keyword>
<keyword id="KW-0143">Chaperone</keyword>
<keyword id="KW-0963">Cytoplasm</keyword>
<keyword id="KW-0413">Isomerase</keyword>
<keyword id="KW-0547">Nucleotide-binding</keyword>
<organism>
    <name type="scientific">Clavibacter sepedonicus</name>
    <name type="common">Clavibacter michiganensis subsp. sepedonicus</name>
    <dbReference type="NCBI Taxonomy" id="31964"/>
    <lineage>
        <taxon>Bacteria</taxon>
        <taxon>Bacillati</taxon>
        <taxon>Actinomycetota</taxon>
        <taxon>Actinomycetes</taxon>
        <taxon>Micrococcales</taxon>
        <taxon>Microbacteriaceae</taxon>
        <taxon>Clavibacter</taxon>
    </lineage>
</organism>
<evidence type="ECO:0000255" key="1">
    <source>
        <dbReference type="HAMAP-Rule" id="MF_00600"/>
    </source>
</evidence>
<accession>B0RAY1</accession>
<reference key="1">
    <citation type="journal article" date="2008" name="J. Bacteriol.">
        <title>Genome of the actinomycete plant pathogen Clavibacter michiganensis subsp. sepedonicus suggests recent niche adaptation.</title>
        <authorList>
            <person name="Bentley S.D."/>
            <person name="Corton C."/>
            <person name="Brown S.E."/>
            <person name="Barron A."/>
            <person name="Clark L."/>
            <person name="Doggett J."/>
            <person name="Harris B."/>
            <person name="Ormond D."/>
            <person name="Quail M.A."/>
            <person name="May G."/>
            <person name="Francis D."/>
            <person name="Knudson D."/>
            <person name="Parkhill J."/>
            <person name="Ishimaru C.A."/>
        </authorList>
    </citation>
    <scope>NUCLEOTIDE SEQUENCE [LARGE SCALE GENOMIC DNA]</scope>
    <source>
        <strain>ATCC 33113 / DSM 20744 / JCM 9667 / LMG 2889 / ICMP 2535 / C-1</strain>
    </source>
</reference>